<comment type="function">
    <text evidence="1">Mitochondrial membrane ATP synthase (F(1)F(0) ATP synthase or Complex V) produces ATP from ADP in the presence of a proton gradient across the membrane which is generated by electron transport complexes of the respiratory chain. F-type ATPases consist of two structural domains, F(1) - containing the extramembraneous catalytic core and F(0) - containing the membrane proton channel, linked together by a central stalk and a peripheral stalk. During catalysis, ATP synthesis in the catalytic domain of F(1) is coupled via a rotary mechanism of the central stalk subunits to proton translocation. Part of the complex F(0) domain. Minor subunit located with subunit a in the membrane (By similarity).</text>
</comment>
<comment type="subunit">
    <text evidence="2">F-type ATPases have 2 components, CF(1) - the catalytic core - and CF(0) - the membrane proton channel. Component of an ATP synthase complex composed of ATP5PB, ATP5MC1, ATP5F1E, ATP5PD, ATP5ME, ATP5PF, ATP5MF, MT-ATP6, MT-ATP8, ATP5F1A, ATP5F1B, ATP5F1D, ATP5F1C, ATP5PO, ATP5MG, ATP5MK and ATP5MJ (By similarity). Interacts with PRICKLE3 (By similarity).</text>
</comment>
<comment type="subcellular location">
    <subcellularLocation>
        <location>Mitochondrion membrane</location>
        <topology>Single-pass membrane protein</topology>
    </subcellularLocation>
</comment>
<comment type="similarity">
    <text evidence="5">Belongs to the ATPase protein 8 family.</text>
</comment>
<proteinExistence type="inferred from homology"/>
<name>ATP8_HYLLA</name>
<dbReference type="EMBL" id="X99256">
    <property type="protein sequence ID" value="CAA67632.1"/>
    <property type="molecule type" value="Genomic_DNA"/>
</dbReference>
<dbReference type="PIR" id="T11837">
    <property type="entry name" value="T11837"/>
</dbReference>
<dbReference type="RefSeq" id="NP_007826.1">
    <property type="nucleotide sequence ID" value="NC_002082.1"/>
</dbReference>
<dbReference type="SMR" id="Q95705"/>
<dbReference type="GeneID" id="808464"/>
<dbReference type="CTD" id="4509"/>
<dbReference type="GO" id="GO:0031966">
    <property type="term" value="C:mitochondrial membrane"/>
    <property type="evidence" value="ECO:0007669"/>
    <property type="project" value="UniProtKB-SubCell"/>
</dbReference>
<dbReference type="GO" id="GO:0045259">
    <property type="term" value="C:proton-transporting ATP synthase complex"/>
    <property type="evidence" value="ECO:0000250"/>
    <property type="project" value="UniProtKB"/>
</dbReference>
<dbReference type="GO" id="GO:0015078">
    <property type="term" value="F:proton transmembrane transporter activity"/>
    <property type="evidence" value="ECO:0007669"/>
    <property type="project" value="InterPro"/>
</dbReference>
<dbReference type="GO" id="GO:0015986">
    <property type="term" value="P:proton motive force-driven ATP synthesis"/>
    <property type="evidence" value="ECO:0007669"/>
    <property type="project" value="InterPro"/>
</dbReference>
<dbReference type="InterPro" id="IPR039017">
    <property type="entry name" value="ATP8_mammal"/>
</dbReference>
<dbReference type="InterPro" id="IPR001421">
    <property type="entry name" value="ATP8_metazoa"/>
</dbReference>
<dbReference type="PANTHER" id="PTHR13722">
    <property type="entry name" value="ATP SYNTHASE PROTEIN 8"/>
    <property type="match status" value="1"/>
</dbReference>
<dbReference type="PANTHER" id="PTHR13722:SF0">
    <property type="entry name" value="ATP SYNTHASE PROTEIN 8"/>
    <property type="match status" value="1"/>
</dbReference>
<dbReference type="Pfam" id="PF00895">
    <property type="entry name" value="ATP-synt_8"/>
    <property type="match status" value="1"/>
</dbReference>
<accession>Q95705</accession>
<geneLocation type="mitochondrion"/>
<keyword id="KW-0007">Acetylation</keyword>
<keyword id="KW-0066">ATP synthesis</keyword>
<keyword id="KW-0138">CF(0)</keyword>
<keyword id="KW-0375">Hydrogen ion transport</keyword>
<keyword id="KW-0406">Ion transport</keyword>
<keyword id="KW-0472">Membrane</keyword>
<keyword id="KW-0496">Mitochondrion</keyword>
<keyword id="KW-0812">Transmembrane</keyword>
<keyword id="KW-1133">Transmembrane helix</keyword>
<keyword id="KW-0813">Transport</keyword>
<reference key="1">
    <citation type="journal article" date="1996" name="Hereditas">
        <title>A complete mitochondrial DNA molecule of the white-handed gibbon, Hylobates lar, and comparison among individual mitochondrial genes of all hominoid genera.</title>
        <authorList>
            <person name="Arnason U."/>
            <person name="Gullberg A."/>
            <person name="Xu X."/>
        </authorList>
    </citation>
    <scope>NUCLEOTIDE SEQUENCE [GENOMIC DNA]</scope>
    <source>
        <strain>Isolate Ester</strain>
    </source>
</reference>
<feature type="chain" id="PRO_0000195537" description="ATP synthase protein 8">
    <location>
        <begin position="1"/>
        <end position="68"/>
    </location>
</feature>
<feature type="transmembrane region" description="Helical" evidence="4">
    <location>
        <begin position="8"/>
        <end position="24"/>
    </location>
</feature>
<feature type="modified residue" description="N6-acetyllysine; alternate" evidence="3">
    <location>
        <position position="54"/>
    </location>
</feature>
<feature type="modified residue" description="N6-succinyllysine; alternate" evidence="3">
    <location>
        <position position="54"/>
    </location>
</feature>
<feature type="modified residue" description="N6-acetyllysine" evidence="3">
    <location>
        <position position="57"/>
    </location>
</feature>
<evidence type="ECO:0000250" key="1"/>
<evidence type="ECO:0000250" key="2">
    <source>
        <dbReference type="UniProtKB" id="P03928"/>
    </source>
</evidence>
<evidence type="ECO:0000250" key="3">
    <source>
        <dbReference type="UniProtKB" id="P03930"/>
    </source>
</evidence>
<evidence type="ECO:0000255" key="4"/>
<evidence type="ECO:0000305" key="5"/>
<organism>
    <name type="scientific">Hylobates lar</name>
    <name type="common">Lar gibbon</name>
    <name type="synonym">White-handed gibbon</name>
    <dbReference type="NCBI Taxonomy" id="9580"/>
    <lineage>
        <taxon>Eukaryota</taxon>
        <taxon>Metazoa</taxon>
        <taxon>Chordata</taxon>
        <taxon>Craniata</taxon>
        <taxon>Vertebrata</taxon>
        <taxon>Euteleostomi</taxon>
        <taxon>Mammalia</taxon>
        <taxon>Eutheria</taxon>
        <taxon>Euarchontoglires</taxon>
        <taxon>Primates</taxon>
        <taxon>Haplorrhini</taxon>
        <taxon>Catarrhini</taxon>
        <taxon>Hylobatidae</taxon>
        <taxon>Hylobates</taxon>
    </lineage>
</organism>
<sequence>MPQLNTTVWPTIIMSMLLALFLLMQLKTLNTHYHPPASPKLTNIKPHNNPWEHKWTKIYSLHSLPPQF</sequence>
<protein>
    <recommendedName>
        <fullName>ATP synthase protein 8</fullName>
    </recommendedName>
    <alternativeName>
        <fullName>A6L</fullName>
    </alternativeName>
    <alternativeName>
        <fullName>F-ATPase subunit 8</fullName>
    </alternativeName>
</protein>
<gene>
    <name type="primary">MT-ATP8</name>
    <name type="synonym">ATP8</name>
    <name type="synonym">ATPASE8</name>
    <name type="synonym">MTATP8</name>
</gene>